<sequence length="134" mass="15229">MLLQPKRTKFRKMHKGRNRGTKVNDNISFGQFALKAISRGRLKSCQIEAARRAISRAIKRQGKIWIRVFPDKPITKKPLEVRMGKGKGNVEYWVALIQPGKILYEINGVPKELAYNAFKLGASKLPVKTTLIGR</sequence>
<feature type="chain" id="PRO_0000062053" description="Large ribosomal subunit protein uL16">
    <location>
        <begin position="1"/>
        <end position="134"/>
    </location>
</feature>
<feature type="region of interest" description="Disordered" evidence="2">
    <location>
        <begin position="1"/>
        <end position="21"/>
    </location>
</feature>
<feature type="compositionally biased region" description="Basic residues" evidence="2">
    <location>
        <begin position="1"/>
        <end position="20"/>
    </location>
</feature>
<gene>
    <name evidence="1" type="primary">rplP</name>
    <name type="ordered locus">BPEN_205</name>
</gene>
<keyword id="KW-1185">Reference proteome</keyword>
<keyword id="KW-0687">Ribonucleoprotein</keyword>
<keyword id="KW-0689">Ribosomal protein</keyword>
<keyword id="KW-0694">RNA-binding</keyword>
<keyword id="KW-0699">rRNA-binding</keyword>
<keyword id="KW-0820">tRNA-binding</keyword>
<dbReference type="EMBL" id="CP000016">
    <property type="protein sequence ID" value="AAZ40839.1"/>
    <property type="molecule type" value="Genomic_DNA"/>
</dbReference>
<dbReference type="RefSeq" id="WP_011282746.1">
    <property type="nucleotide sequence ID" value="NC_007292.1"/>
</dbReference>
<dbReference type="SMR" id="Q493K1"/>
<dbReference type="STRING" id="291272.BPEN_205"/>
<dbReference type="KEGG" id="bpn:BPEN_205"/>
<dbReference type="eggNOG" id="COG0197">
    <property type="taxonomic scope" value="Bacteria"/>
</dbReference>
<dbReference type="HOGENOM" id="CLU_078858_2_1_6"/>
<dbReference type="OrthoDB" id="9802589at2"/>
<dbReference type="Proteomes" id="UP000007794">
    <property type="component" value="Chromosome"/>
</dbReference>
<dbReference type="GO" id="GO:0022625">
    <property type="term" value="C:cytosolic large ribosomal subunit"/>
    <property type="evidence" value="ECO:0007669"/>
    <property type="project" value="TreeGrafter"/>
</dbReference>
<dbReference type="GO" id="GO:0019843">
    <property type="term" value="F:rRNA binding"/>
    <property type="evidence" value="ECO:0007669"/>
    <property type="project" value="UniProtKB-UniRule"/>
</dbReference>
<dbReference type="GO" id="GO:0003735">
    <property type="term" value="F:structural constituent of ribosome"/>
    <property type="evidence" value="ECO:0007669"/>
    <property type="project" value="InterPro"/>
</dbReference>
<dbReference type="GO" id="GO:0000049">
    <property type="term" value="F:tRNA binding"/>
    <property type="evidence" value="ECO:0007669"/>
    <property type="project" value="UniProtKB-KW"/>
</dbReference>
<dbReference type="GO" id="GO:0006412">
    <property type="term" value="P:translation"/>
    <property type="evidence" value="ECO:0007669"/>
    <property type="project" value="UniProtKB-UniRule"/>
</dbReference>
<dbReference type="CDD" id="cd01433">
    <property type="entry name" value="Ribosomal_L16_L10e"/>
    <property type="match status" value="1"/>
</dbReference>
<dbReference type="FunFam" id="3.90.1170.10:FF:000001">
    <property type="entry name" value="50S ribosomal protein L16"/>
    <property type="match status" value="1"/>
</dbReference>
<dbReference type="Gene3D" id="3.90.1170.10">
    <property type="entry name" value="Ribosomal protein L10e/L16"/>
    <property type="match status" value="1"/>
</dbReference>
<dbReference type="HAMAP" id="MF_01342">
    <property type="entry name" value="Ribosomal_uL16"/>
    <property type="match status" value="1"/>
</dbReference>
<dbReference type="InterPro" id="IPR047873">
    <property type="entry name" value="Ribosomal_uL16"/>
</dbReference>
<dbReference type="InterPro" id="IPR000114">
    <property type="entry name" value="Ribosomal_uL16_bact-type"/>
</dbReference>
<dbReference type="InterPro" id="IPR020798">
    <property type="entry name" value="Ribosomal_uL16_CS"/>
</dbReference>
<dbReference type="InterPro" id="IPR016180">
    <property type="entry name" value="Ribosomal_uL16_dom"/>
</dbReference>
<dbReference type="InterPro" id="IPR036920">
    <property type="entry name" value="Ribosomal_uL16_sf"/>
</dbReference>
<dbReference type="NCBIfam" id="TIGR01164">
    <property type="entry name" value="rplP_bact"/>
    <property type="match status" value="1"/>
</dbReference>
<dbReference type="PANTHER" id="PTHR12220">
    <property type="entry name" value="50S/60S RIBOSOMAL PROTEIN L16"/>
    <property type="match status" value="1"/>
</dbReference>
<dbReference type="PANTHER" id="PTHR12220:SF13">
    <property type="entry name" value="LARGE RIBOSOMAL SUBUNIT PROTEIN UL16M"/>
    <property type="match status" value="1"/>
</dbReference>
<dbReference type="Pfam" id="PF00252">
    <property type="entry name" value="Ribosomal_L16"/>
    <property type="match status" value="1"/>
</dbReference>
<dbReference type="PRINTS" id="PR00060">
    <property type="entry name" value="RIBOSOMALL16"/>
</dbReference>
<dbReference type="SUPFAM" id="SSF54686">
    <property type="entry name" value="Ribosomal protein L16p/L10e"/>
    <property type="match status" value="1"/>
</dbReference>
<dbReference type="PROSITE" id="PS00586">
    <property type="entry name" value="RIBOSOMAL_L16_1"/>
    <property type="match status" value="1"/>
</dbReference>
<dbReference type="PROSITE" id="PS00701">
    <property type="entry name" value="RIBOSOMAL_L16_2"/>
    <property type="match status" value="1"/>
</dbReference>
<proteinExistence type="inferred from homology"/>
<organism>
    <name type="scientific">Blochmanniella pennsylvanica (strain BPEN)</name>
    <dbReference type="NCBI Taxonomy" id="291272"/>
    <lineage>
        <taxon>Bacteria</taxon>
        <taxon>Pseudomonadati</taxon>
        <taxon>Pseudomonadota</taxon>
        <taxon>Gammaproteobacteria</taxon>
        <taxon>Enterobacterales</taxon>
        <taxon>Enterobacteriaceae</taxon>
        <taxon>ant endosymbionts</taxon>
        <taxon>Candidatus Blochmanniella</taxon>
    </lineage>
</organism>
<reference key="1">
    <citation type="journal article" date="2005" name="Genome Res.">
        <title>Genome sequence of Blochmannia pennsylvanicus indicates parallel evolutionary trends among bacterial mutualists of insects.</title>
        <authorList>
            <person name="Degnan P.H."/>
            <person name="Lazarus A.B."/>
            <person name="Wernegreen J.J."/>
        </authorList>
    </citation>
    <scope>NUCLEOTIDE SEQUENCE [LARGE SCALE GENOMIC DNA]</scope>
    <source>
        <strain>BPEN</strain>
    </source>
</reference>
<name>RL16_BLOPB</name>
<accession>Q493K1</accession>
<protein>
    <recommendedName>
        <fullName evidence="1">Large ribosomal subunit protein uL16</fullName>
    </recommendedName>
    <alternativeName>
        <fullName evidence="3">50S ribosomal protein L16</fullName>
    </alternativeName>
</protein>
<evidence type="ECO:0000255" key="1">
    <source>
        <dbReference type="HAMAP-Rule" id="MF_01342"/>
    </source>
</evidence>
<evidence type="ECO:0000256" key="2">
    <source>
        <dbReference type="SAM" id="MobiDB-lite"/>
    </source>
</evidence>
<evidence type="ECO:0000305" key="3"/>
<comment type="function">
    <text evidence="1">Binds 23S rRNA and is also seen to make contacts with the A and possibly P site tRNAs.</text>
</comment>
<comment type="subunit">
    <text evidence="1">Part of the 50S ribosomal subunit.</text>
</comment>
<comment type="similarity">
    <text evidence="1">Belongs to the universal ribosomal protein uL16 family.</text>
</comment>